<keyword id="KW-0012">Acyltransferase</keyword>
<keyword id="KW-0414">Isoprene biosynthesis</keyword>
<keyword id="KW-1185">Reference proteome</keyword>
<keyword id="KW-0808">Transferase</keyword>
<comment type="function">
    <text evidence="1">Catalyzes the condensation of acetyl-CoA with acetoacetyl-CoA to form 3-hydroxy-3-methylglutaryl-CoA (HMG-CoA). Functions in the mevalonate (MVA) pathway leading to isopentenyl diphosphate (IPP), a key precursor for the biosynthesis of isoprenoid compounds that are building blocks of archaeal membrane lipids.</text>
</comment>
<comment type="catalytic activity">
    <reaction evidence="1">
        <text>acetoacetyl-CoA + acetyl-CoA + H2O = (3S)-3-hydroxy-3-methylglutaryl-CoA + CoA + H(+)</text>
        <dbReference type="Rhea" id="RHEA:10188"/>
        <dbReference type="ChEBI" id="CHEBI:15377"/>
        <dbReference type="ChEBI" id="CHEBI:15378"/>
        <dbReference type="ChEBI" id="CHEBI:43074"/>
        <dbReference type="ChEBI" id="CHEBI:57286"/>
        <dbReference type="ChEBI" id="CHEBI:57287"/>
        <dbReference type="ChEBI" id="CHEBI:57288"/>
        <dbReference type="EC" id="2.3.3.10"/>
    </reaction>
    <physiologicalReaction direction="left-to-right" evidence="1">
        <dbReference type="Rhea" id="RHEA:10189"/>
    </physiologicalReaction>
</comment>
<comment type="pathway">
    <text evidence="1">Metabolic intermediate biosynthesis; (R)-mevalonate biosynthesis; (R)-mevalonate from acetyl-CoA: step 2/3.</text>
</comment>
<comment type="subunit">
    <text evidence="1">Interacts with acetoacetyl-CoA thiolase that catalyzes the precedent step in the pathway and with a DUF35 protein. The acetoacetyl-CoA thiolase/HMG-CoA synthase complex channels the intermediate via a fused CoA-binding site, which allows for efficient coupling of the endergonic thiolase reaction with the exergonic HMGCS reaction.</text>
</comment>
<comment type="similarity">
    <text evidence="1">Belongs to the thiolase-like superfamily. Archaeal HMG-CoA synthase family.</text>
</comment>
<accession>Q8TVL0</accession>
<reference key="1">
    <citation type="journal article" date="2002" name="Proc. Natl. Acad. Sci. U.S.A.">
        <title>The complete genome of hyperthermophile Methanopyrus kandleri AV19 and monophyly of archaeal methanogens.</title>
        <authorList>
            <person name="Slesarev A.I."/>
            <person name="Mezhevaya K.V."/>
            <person name="Makarova K.S."/>
            <person name="Polushin N.N."/>
            <person name="Shcherbinina O.V."/>
            <person name="Shakhova V.V."/>
            <person name="Belova G.I."/>
            <person name="Aravind L."/>
            <person name="Natale D.A."/>
            <person name="Rogozin I.B."/>
            <person name="Tatusov R.L."/>
            <person name="Wolf Y.I."/>
            <person name="Stetter K.O."/>
            <person name="Malykh A.G."/>
            <person name="Koonin E.V."/>
            <person name="Kozyavkin S.A."/>
        </authorList>
    </citation>
    <scope>NUCLEOTIDE SEQUENCE [LARGE SCALE GENOMIC DNA]</scope>
    <source>
        <strain>AV19 / DSM 6324 / JCM 9639 / NBRC 100938</strain>
    </source>
</reference>
<gene>
    <name type="ordered locus">MK1379</name>
</gene>
<protein>
    <recommendedName>
        <fullName evidence="1">Hydroxymethylglutaryl-CoA synthase</fullName>
        <shortName evidence="1">HMG-CoA synthase</shortName>
        <shortName evidence="1">HMGCS</shortName>
        <ecNumber evidence="1">2.3.3.10</ecNumber>
    </recommendedName>
</protein>
<name>HMGCS_METKA</name>
<proteinExistence type="inferred from homology"/>
<sequence length="350" mass="37598">MIPSERVGIVGYGAYVPRYRIKAEEIAAVWGDDVDSIKSGLMIEEKSVPSETEDSATIAVEAAKNAVARAEIDPKDIGAIYVGSESPPYAVKPTATIVAAAIGATPDLTAADYEFACKAGTAAIQTCAGLVASGMIKYGLAIGADTAQGAPGDPLEYTAAAGGAAFVIGRKKLVAEMEGTYSYTTDTPDFWRREGQPYPRHGGRFTGAPAYFKHIIRAARGLMEELDLSPEDFDYAVFHQPNGKFPRKVARSLGFEPEQVEPTIVVDRVGNTYSGSSLLGFTAALDRAEPGDRILVVSYGSGAGSDAFSFVVTERIEEVREKAPLLEEYLEDRVYVTYGEYAKMKKKLKF</sequence>
<dbReference type="EC" id="2.3.3.10" evidence="1"/>
<dbReference type="EMBL" id="AE009439">
    <property type="protein sequence ID" value="AAM02592.1"/>
    <property type="molecule type" value="Genomic_DNA"/>
</dbReference>
<dbReference type="RefSeq" id="WP_011019747.1">
    <property type="nucleotide sequence ID" value="NC_003551.1"/>
</dbReference>
<dbReference type="SMR" id="Q8TVL0"/>
<dbReference type="FunCoup" id="Q8TVL0">
    <property type="interactions" value="67"/>
</dbReference>
<dbReference type="STRING" id="190192.MK1379"/>
<dbReference type="PaxDb" id="190192-MK1379"/>
<dbReference type="EnsemblBacteria" id="AAM02592">
    <property type="protein sequence ID" value="AAM02592"/>
    <property type="gene ID" value="MK1379"/>
</dbReference>
<dbReference type="GeneID" id="1477974"/>
<dbReference type="KEGG" id="mka:MK1379"/>
<dbReference type="PATRIC" id="fig|190192.8.peg.1534"/>
<dbReference type="HOGENOM" id="CLU_039592_7_0_2"/>
<dbReference type="InParanoid" id="Q8TVL0"/>
<dbReference type="OrthoDB" id="5812at2157"/>
<dbReference type="UniPathway" id="UPA00058">
    <property type="reaction ID" value="UER00102"/>
</dbReference>
<dbReference type="Proteomes" id="UP000001826">
    <property type="component" value="Chromosome"/>
</dbReference>
<dbReference type="GO" id="GO:0003985">
    <property type="term" value="F:acetyl-CoA C-acetyltransferase activity"/>
    <property type="evidence" value="ECO:0007669"/>
    <property type="project" value="UniProtKB-UniRule"/>
</dbReference>
<dbReference type="GO" id="GO:0004421">
    <property type="term" value="F:hydroxymethylglutaryl-CoA synthase activity"/>
    <property type="evidence" value="ECO:0007669"/>
    <property type="project" value="InterPro"/>
</dbReference>
<dbReference type="GO" id="GO:0010142">
    <property type="term" value="P:farnesyl diphosphate biosynthetic process, mevalonate pathway"/>
    <property type="evidence" value="ECO:0007669"/>
    <property type="project" value="TreeGrafter"/>
</dbReference>
<dbReference type="GO" id="GO:0019287">
    <property type="term" value="P:isopentenyl diphosphate biosynthetic process, mevalonate pathway"/>
    <property type="evidence" value="ECO:0007669"/>
    <property type="project" value="UniProtKB-UniRule"/>
</dbReference>
<dbReference type="CDD" id="cd00827">
    <property type="entry name" value="init_cond_enzymes"/>
    <property type="match status" value="1"/>
</dbReference>
<dbReference type="FunFam" id="3.40.47.10:FF:000046">
    <property type="entry name" value="UPF0219 protein M1627_1703"/>
    <property type="match status" value="1"/>
</dbReference>
<dbReference type="Gene3D" id="3.40.47.10">
    <property type="match status" value="1"/>
</dbReference>
<dbReference type="HAMAP" id="MF_01409">
    <property type="entry name" value="HMG_CoA_synth_arch"/>
    <property type="match status" value="1"/>
</dbReference>
<dbReference type="InterPro" id="IPR013747">
    <property type="entry name" value="ACP_syn_III_C"/>
</dbReference>
<dbReference type="InterPro" id="IPR004656">
    <property type="entry name" value="HMG_CoA_Synthase"/>
</dbReference>
<dbReference type="InterPro" id="IPR016039">
    <property type="entry name" value="Thiolase-like"/>
</dbReference>
<dbReference type="NCBIfam" id="TIGR00748">
    <property type="entry name" value="HMG_CoA_syn_Arc"/>
    <property type="match status" value="1"/>
</dbReference>
<dbReference type="NCBIfam" id="NF003274">
    <property type="entry name" value="PRK04262.1"/>
    <property type="match status" value="1"/>
</dbReference>
<dbReference type="PANTHER" id="PTHR43323">
    <property type="entry name" value="3-HYDROXY-3-METHYLGLUTARYL COENZYME A SYNTHASE"/>
    <property type="match status" value="1"/>
</dbReference>
<dbReference type="PANTHER" id="PTHR43323:SF2">
    <property type="entry name" value="HYDROXYMETHYLGLUTARYL-COA SYNTHASE"/>
    <property type="match status" value="1"/>
</dbReference>
<dbReference type="Pfam" id="PF08541">
    <property type="entry name" value="ACP_syn_III_C"/>
    <property type="match status" value="1"/>
</dbReference>
<dbReference type="SUPFAM" id="SSF53901">
    <property type="entry name" value="Thiolase-like"/>
    <property type="match status" value="2"/>
</dbReference>
<evidence type="ECO:0000255" key="1">
    <source>
        <dbReference type="HAMAP-Rule" id="MF_01409"/>
    </source>
</evidence>
<feature type="chain" id="PRO_0000057615" description="Hydroxymethylglutaryl-CoA synthase">
    <location>
        <begin position="1"/>
        <end position="350"/>
    </location>
</feature>
<feature type="active site" description="Proton donor/acceptor" evidence="1">
    <location>
        <position position="85"/>
    </location>
</feature>
<feature type="active site" description="Acyl-thioester intermediate" evidence="1">
    <location>
        <position position="117"/>
    </location>
</feature>
<feature type="active site" description="Proton donor/acceptor" evidence="1">
    <location>
        <position position="239"/>
    </location>
</feature>
<feature type="binding site" evidence="1">
    <location>
        <position position="33"/>
    </location>
    <ligand>
        <name>(3S)-3-hydroxy-3-methylglutaryl-CoA</name>
        <dbReference type="ChEBI" id="CHEBI:43074"/>
    </ligand>
</feature>
<feature type="binding site" evidence="1">
    <location>
        <position position="34"/>
    </location>
    <ligand>
        <name>(3S)-3-hydroxy-3-methylglutaryl-CoA</name>
        <dbReference type="ChEBI" id="CHEBI:43074"/>
    </ligand>
</feature>
<feature type="binding site" evidence="1">
    <location>
        <position position="117"/>
    </location>
    <ligand>
        <name>(3S)-3-hydroxy-3-methylglutaryl-CoA</name>
        <dbReference type="ChEBI" id="CHEBI:43074"/>
    </ligand>
</feature>
<feature type="binding site" evidence="1">
    <location>
        <position position="158"/>
    </location>
    <ligand>
        <name>(3S)-3-hydroxy-3-methylglutaryl-CoA</name>
        <dbReference type="ChEBI" id="CHEBI:43074"/>
    </ligand>
</feature>
<feature type="binding site" evidence="1">
    <location>
        <position position="204"/>
    </location>
    <ligand>
        <name>CoA</name>
        <dbReference type="ChEBI" id="CHEBI:57287"/>
        <note>ligand shared with acetoacetyl-CoA thiolase</note>
    </ligand>
</feature>
<feature type="binding site" evidence="1">
    <location>
        <position position="206"/>
    </location>
    <ligand>
        <name>(3S)-3-hydroxy-3-methylglutaryl-CoA</name>
        <dbReference type="ChEBI" id="CHEBI:43074"/>
    </ligand>
</feature>
<feature type="binding site" evidence="1">
    <location>
        <position position="239"/>
    </location>
    <ligand>
        <name>(3S)-3-hydroxy-3-methylglutaryl-CoA</name>
        <dbReference type="ChEBI" id="CHEBI:43074"/>
    </ligand>
</feature>
<feature type="binding site" evidence="1">
    <location>
        <position position="244"/>
    </location>
    <ligand>
        <name>CoA</name>
        <dbReference type="ChEBI" id="CHEBI:57287"/>
        <note>ligand shared with acetoacetyl-CoA thiolase</note>
    </ligand>
</feature>
<feature type="binding site" evidence="1">
    <location>
        <position position="248"/>
    </location>
    <ligand>
        <name>(3S)-3-hydroxy-3-methylglutaryl-CoA</name>
        <dbReference type="ChEBI" id="CHEBI:43074"/>
    </ligand>
</feature>
<feature type="binding site" evidence="1">
    <location>
        <position position="271"/>
    </location>
    <ligand>
        <name>(3S)-3-hydroxy-3-methylglutaryl-CoA</name>
        <dbReference type="ChEBI" id="CHEBI:43074"/>
    </ligand>
</feature>
<feature type="binding site" evidence="1">
    <location>
        <position position="301"/>
    </location>
    <ligand>
        <name>(3S)-3-hydroxy-3-methylglutaryl-CoA</name>
        <dbReference type="ChEBI" id="CHEBI:43074"/>
    </ligand>
</feature>
<organism>
    <name type="scientific">Methanopyrus kandleri (strain AV19 / DSM 6324 / JCM 9639 / NBRC 100938)</name>
    <dbReference type="NCBI Taxonomy" id="190192"/>
    <lineage>
        <taxon>Archaea</taxon>
        <taxon>Methanobacteriati</taxon>
        <taxon>Methanobacteriota</taxon>
        <taxon>Methanomada group</taxon>
        <taxon>Methanopyri</taxon>
        <taxon>Methanopyrales</taxon>
        <taxon>Methanopyraceae</taxon>
        <taxon>Methanopyrus</taxon>
    </lineage>
</organism>